<feature type="chain" id="PRO_0000195651" description="Hirudin-3B'">
    <location>
        <begin position="1"/>
        <end position="65"/>
    </location>
</feature>
<feature type="region of interest" description="Interaction with thrombin active site" evidence="1">
    <location>
        <begin position="1"/>
        <end position="3"/>
    </location>
</feature>
<feature type="region of interest" description="Disordered" evidence="2">
    <location>
        <begin position="40"/>
        <end position="65"/>
    </location>
</feature>
<feature type="region of interest" description="Interaction with fibrinogen-binding exosite of thrombin" evidence="1">
    <location>
        <begin position="55"/>
        <end position="65"/>
    </location>
</feature>
<feature type="compositionally biased region" description="Acidic residues" evidence="2">
    <location>
        <begin position="55"/>
        <end position="65"/>
    </location>
</feature>
<feature type="modified residue" description="Sulfotyrosine" evidence="1">
    <location>
        <position position="63"/>
    </location>
</feature>
<feature type="glycosylation site" description="O-linked (GalNAc...) threonine" evidence="1">
    <location>
        <position position="45"/>
    </location>
</feature>
<feature type="disulfide bond" evidence="1">
    <location>
        <begin position="6"/>
        <end position="14"/>
    </location>
</feature>
<feature type="disulfide bond" evidence="1">
    <location>
        <begin position="16"/>
        <end position="28"/>
    </location>
</feature>
<feature type="disulfide bond" evidence="1">
    <location>
        <begin position="22"/>
        <end position="39"/>
    </location>
</feature>
<feature type="helix" evidence="4">
    <location>
        <begin position="61"/>
        <end position="64"/>
    </location>
</feature>
<reference key="1">
    <citation type="journal article" date="1989" name="FEBS Lett.">
        <title>Primary structures of new 'iso-hirudins'.</title>
        <authorList>
            <person name="Scharf M."/>
            <person name="Engels J."/>
            <person name="Tripier D."/>
        </authorList>
    </citation>
    <scope>PROTEIN SEQUENCE</scope>
</reference>
<sequence length="65" mass="6968">VVYTDCTESGQNLCLCQGSNVCGQGNKCILGSNGEKNQCVTGEGTPKPQSHNDGDFEEIPEEYLQ</sequence>
<organism>
    <name type="scientific">Hirudo medicinalis</name>
    <name type="common">Medicinal leech</name>
    <dbReference type="NCBI Taxonomy" id="6421"/>
    <lineage>
        <taxon>Eukaryota</taxon>
        <taxon>Metazoa</taxon>
        <taxon>Spiralia</taxon>
        <taxon>Lophotrochozoa</taxon>
        <taxon>Annelida</taxon>
        <taxon>Clitellata</taxon>
        <taxon>Hirudinea</taxon>
        <taxon>Hirudinida</taxon>
        <taxon>Hirudiniformes</taxon>
        <taxon>Hirudinidae</taxon>
        <taxon>Hirudo</taxon>
    </lineage>
</organism>
<evidence type="ECO:0000250" key="1"/>
<evidence type="ECO:0000256" key="2">
    <source>
        <dbReference type="SAM" id="MobiDB-lite"/>
    </source>
</evidence>
<evidence type="ECO:0000305" key="3"/>
<evidence type="ECO:0007829" key="4">
    <source>
        <dbReference type="PDB" id="3C1K"/>
    </source>
</evidence>
<dbReference type="PIR" id="S78521">
    <property type="entry name" value="S78521"/>
</dbReference>
<dbReference type="PDB" id="1D6W">
    <property type="method" value="X-ray"/>
    <property type="resolution" value="2.00 A"/>
    <property type="chains" value="I=55-64"/>
</dbReference>
<dbReference type="PDB" id="1O5G">
    <property type="method" value="X-ray"/>
    <property type="resolution" value="1.75 A"/>
    <property type="chains" value="I=55-65"/>
</dbReference>
<dbReference type="PDB" id="1Z71">
    <property type="method" value="X-ray"/>
    <property type="resolution" value="1.80 A"/>
    <property type="chains" value="B=55-65"/>
</dbReference>
<dbReference type="PDB" id="1ZGI">
    <property type="method" value="X-ray"/>
    <property type="resolution" value="2.20 A"/>
    <property type="chains" value="B=55-64"/>
</dbReference>
<dbReference type="PDB" id="1ZGV">
    <property type="method" value="X-ray"/>
    <property type="resolution" value="2.20 A"/>
    <property type="chains" value="B=55-64"/>
</dbReference>
<dbReference type="PDB" id="2BDY">
    <property type="method" value="X-ray"/>
    <property type="resolution" value="1.61 A"/>
    <property type="chains" value="B=55-64"/>
</dbReference>
<dbReference type="PDB" id="3C1K">
    <property type="method" value="X-ray"/>
    <property type="resolution" value="1.84 A"/>
    <property type="chains" value="B=55-65"/>
</dbReference>
<dbReference type="PDB" id="5AFY">
    <property type="method" value="X-ray"/>
    <property type="resolution" value="1.12 A"/>
    <property type="chains" value="I=54-65"/>
</dbReference>
<dbReference type="PDB" id="5AFZ">
    <property type="method" value="X-ray"/>
    <property type="resolution" value="1.53 A"/>
    <property type="chains" value="I=54-65"/>
</dbReference>
<dbReference type="PDB" id="5AHG">
    <property type="method" value="X-ray"/>
    <property type="resolution" value="1.24 A"/>
    <property type="chains" value="I=54-65"/>
</dbReference>
<dbReference type="PDBsum" id="1D6W"/>
<dbReference type="PDBsum" id="1O5G"/>
<dbReference type="PDBsum" id="1Z71"/>
<dbReference type="PDBsum" id="1ZGI"/>
<dbReference type="PDBsum" id="1ZGV"/>
<dbReference type="PDBsum" id="2BDY"/>
<dbReference type="PDBsum" id="3C1K"/>
<dbReference type="PDBsum" id="5AFY"/>
<dbReference type="PDBsum" id="5AFZ"/>
<dbReference type="PDBsum" id="5AHG"/>
<dbReference type="BMRB" id="P28511"/>
<dbReference type="SMR" id="P28511"/>
<dbReference type="Allergome" id="9843">
    <property type="allergen name" value="Hir me Hirudin"/>
</dbReference>
<dbReference type="EvolutionaryTrace" id="P28511"/>
<dbReference type="GO" id="GO:0005576">
    <property type="term" value="C:extracellular region"/>
    <property type="evidence" value="ECO:0007669"/>
    <property type="project" value="UniProtKB-SubCell"/>
</dbReference>
<dbReference type="GO" id="GO:0004867">
    <property type="term" value="F:serine-type endopeptidase inhibitor activity"/>
    <property type="evidence" value="ECO:0007669"/>
    <property type="project" value="UniProtKB-KW"/>
</dbReference>
<dbReference type="FunFam" id="2.70.10.10:FF:000001">
    <property type="entry name" value="Hirudin variant-1"/>
    <property type="match status" value="1"/>
</dbReference>
<dbReference type="Gene3D" id="2.70.10.10">
    <property type="entry name" value="Thrombin Inhibitor (Hirudin), subunit I"/>
    <property type="match status" value="1"/>
</dbReference>
<dbReference type="InterPro" id="IPR024793">
    <property type="entry name" value="Hirudin"/>
</dbReference>
<dbReference type="InterPro" id="IPR011061">
    <property type="entry name" value="Hirudin/antistatin"/>
</dbReference>
<dbReference type="InterPro" id="IPR000429">
    <property type="entry name" value="Prot_inh_hirudin"/>
</dbReference>
<dbReference type="Pfam" id="PF00713">
    <property type="entry name" value="Hirudin"/>
    <property type="match status" value="1"/>
</dbReference>
<dbReference type="PIRSF" id="PIRSF001640">
    <property type="entry name" value="Hirudin"/>
    <property type="match status" value="1"/>
</dbReference>
<dbReference type="PRINTS" id="PR00777">
    <property type="entry name" value="HIRUDIN"/>
</dbReference>
<dbReference type="SUPFAM" id="SSF57262">
    <property type="entry name" value="Leech antihemostatic proteins"/>
    <property type="match status" value="1"/>
</dbReference>
<comment type="function">
    <text>Hirudin is a potent thrombin-specific protease inhibitor. It forms a stable non-covalent complex with alpha-thrombin, thereby abolishing its ability to cleave fibrinogen.</text>
</comment>
<comment type="subcellular location">
    <subcellularLocation>
        <location>Secreted</location>
    </subcellularLocation>
</comment>
<comment type="similarity">
    <text evidence="3">Belongs to the protease inhibitor I14 (hirudin) family.</text>
</comment>
<accession>P28511</accession>
<proteinExistence type="evidence at protein level"/>
<protein>
    <recommendedName>
        <fullName>Hirudin-3B'</fullName>
    </recommendedName>
    <alternativeName>
        <fullName>Hirudin IIIB'</fullName>
    </alternativeName>
</protein>
<name>HIR3C_HIRME</name>
<keyword id="KW-0002">3D-structure</keyword>
<keyword id="KW-0903">Direct protein sequencing</keyword>
<keyword id="KW-1015">Disulfide bond</keyword>
<keyword id="KW-0325">Glycoprotein</keyword>
<keyword id="KW-0646">Protease inhibitor</keyword>
<keyword id="KW-0964">Secreted</keyword>
<keyword id="KW-0722">Serine protease inhibitor</keyword>
<keyword id="KW-0765">Sulfation</keyword>